<feature type="chain" id="PRO_0000313045" description="Ubiquitin carboxyl-terminal hydrolase 19">
    <location>
        <begin position="1"/>
        <end position="672"/>
    </location>
</feature>
<feature type="transmembrane region" description="Helical" evidence="2">
    <location>
        <begin position="11"/>
        <end position="31"/>
    </location>
</feature>
<feature type="domain" description="USP">
    <location>
        <begin position="174"/>
        <end position="480"/>
    </location>
</feature>
<feature type="zinc finger region" description="MYND-type" evidence="3">
    <location>
        <begin position="64"/>
        <end position="101"/>
    </location>
</feature>
<feature type="region of interest" description="Disordered" evidence="5">
    <location>
        <begin position="484"/>
        <end position="672"/>
    </location>
</feature>
<feature type="compositionally biased region" description="Basic and acidic residues" evidence="5">
    <location>
        <begin position="488"/>
        <end position="499"/>
    </location>
</feature>
<feature type="compositionally biased region" description="Polar residues" evidence="5">
    <location>
        <begin position="500"/>
        <end position="527"/>
    </location>
</feature>
<feature type="compositionally biased region" description="Basic and acidic residues" evidence="5">
    <location>
        <begin position="533"/>
        <end position="543"/>
    </location>
</feature>
<feature type="compositionally biased region" description="Basic and acidic residues" evidence="5">
    <location>
        <begin position="553"/>
        <end position="594"/>
    </location>
</feature>
<feature type="compositionally biased region" description="Polar residues" evidence="5">
    <location>
        <begin position="606"/>
        <end position="615"/>
    </location>
</feature>
<feature type="compositionally biased region" description="Basic and acidic residues" evidence="5">
    <location>
        <begin position="623"/>
        <end position="666"/>
    </location>
</feature>
<feature type="active site" description="Nucleophile" evidence="4">
    <location>
        <position position="183"/>
    </location>
</feature>
<feature type="active site" description="Proton acceptor" evidence="4">
    <location>
        <position position="439"/>
    </location>
</feature>
<feature type="binding site" evidence="3">
    <location>
        <position position="64"/>
    </location>
    <ligand>
        <name>Zn(2+)</name>
        <dbReference type="ChEBI" id="CHEBI:29105"/>
        <label>1</label>
    </ligand>
</feature>
<feature type="binding site" evidence="3">
    <location>
        <position position="67"/>
    </location>
    <ligand>
        <name>Zn(2+)</name>
        <dbReference type="ChEBI" id="CHEBI:29105"/>
        <label>1</label>
    </ligand>
</feature>
<feature type="binding site" evidence="3">
    <location>
        <position position="75"/>
    </location>
    <ligand>
        <name>Zn(2+)</name>
        <dbReference type="ChEBI" id="CHEBI:29105"/>
        <label>2</label>
    </ligand>
</feature>
<feature type="binding site" evidence="3">
    <location>
        <position position="78"/>
    </location>
    <ligand>
        <name>Zn(2+)</name>
        <dbReference type="ChEBI" id="CHEBI:29105"/>
        <label>2</label>
    </ligand>
</feature>
<feature type="binding site" evidence="3">
    <location>
        <position position="84"/>
    </location>
    <ligand>
        <name>Zn(2+)</name>
        <dbReference type="ChEBI" id="CHEBI:29105"/>
        <label>1</label>
    </ligand>
</feature>
<feature type="binding site" evidence="3">
    <location>
        <position position="88"/>
    </location>
    <ligand>
        <name>Zn(2+)</name>
        <dbReference type="ChEBI" id="CHEBI:29105"/>
        <label>1</label>
    </ligand>
</feature>
<feature type="binding site" evidence="3">
    <location>
        <position position="97"/>
    </location>
    <ligand>
        <name>Zn(2+)</name>
        <dbReference type="ChEBI" id="CHEBI:29105"/>
        <label>2</label>
    </ligand>
</feature>
<feature type="binding site" evidence="3">
    <location>
        <position position="101"/>
    </location>
    <ligand>
        <name>Zn(2+)</name>
        <dbReference type="ChEBI" id="CHEBI:29105"/>
        <label>2</label>
    </ligand>
</feature>
<evidence type="ECO:0000250" key="1"/>
<evidence type="ECO:0000255" key="2"/>
<evidence type="ECO:0000255" key="3">
    <source>
        <dbReference type="PROSITE-ProRule" id="PRU00134"/>
    </source>
</evidence>
<evidence type="ECO:0000255" key="4">
    <source>
        <dbReference type="PROSITE-ProRule" id="PRU10092"/>
    </source>
</evidence>
<evidence type="ECO:0000256" key="5">
    <source>
        <dbReference type="SAM" id="MobiDB-lite"/>
    </source>
</evidence>
<evidence type="ECO:0000305" key="6"/>
<reference key="1">
    <citation type="journal article" date="1999" name="Nature">
        <title>Sequence and analysis of chromosome 2 of the plant Arabidopsis thaliana.</title>
        <authorList>
            <person name="Lin X."/>
            <person name="Kaul S."/>
            <person name="Rounsley S.D."/>
            <person name="Shea T.P."/>
            <person name="Benito M.-I."/>
            <person name="Town C.D."/>
            <person name="Fujii C.Y."/>
            <person name="Mason T.M."/>
            <person name="Bowman C.L."/>
            <person name="Barnstead M.E."/>
            <person name="Feldblyum T.V."/>
            <person name="Buell C.R."/>
            <person name="Ketchum K.A."/>
            <person name="Lee J.J."/>
            <person name="Ronning C.M."/>
            <person name="Koo H.L."/>
            <person name="Moffat K.S."/>
            <person name="Cronin L.A."/>
            <person name="Shen M."/>
            <person name="Pai G."/>
            <person name="Van Aken S."/>
            <person name="Umayam L."/>
            <person name="Tallon L.J."/>
            <person name="Gill J.E."/>
            <person name="Adams M.D."/>
            <person name="Carrera A.J."/>
            <person name="Creasy T.H."/>
            <person name="Goodman H.M."/>
            <person name="Somerville C.R."/>
            <person name="Copenhaver G.P."/>
            <person name="Preuss D."/>
            <person name="Nierman W.C."/>
            <person name="White O."/>
            <person name="Eisen J.A."/>
            <person name="Salzberg S.L."/>
            <person name="Fraser C.M."/>
            <person name="Venter J.C."/>
        </authorList>
    </citation>
    <scope>NUCLEOTIDE SEQUENCE [LARGE SCALE GENOMIC DNA]</scope>
    <source>
        <strain>cv. Columbia</strain>
    </source>
</reference>
<reference key="2">
    <citation type="journal article" date="2017" name="Plant J.">
        <title>Araport11: a complete reannotation of the Arabidopsis thaliana reference genome.</title>
        <authorList>
            <person name="Cheng C.Y."/>
            <person name="Krishnakumar V."/>
            <person name="Chan A.P."/>
            <person name="Thibaud-Nissen F."/>
            <person name="Schobel S."/>
            <person name="Town C.D."/>
        </authorList>
    </citation>
    <scope>GENOME REANNOTATION</scope>
    <source>
        <strain>cv. Columbia</strain>
    </source>
</reference>
<reference key="3">
    <citation type="journal article" date="2003" name="Science">
        <title>Empirical analysis of transcriptional activity in the Arabidopsis genome.</title>
        <authorList>
            <person name="Yamada K."/>
            <person name="Lim J."/>
            <person name="Dale J.M."/>
            <person name="Chen H."/>
            <person name="Shinn P."/>
            <person name="Palm C.J."/>
            <person name="Southwick A.M."/>
            <person name="Wu H.C."/>
            <person name="Kim C.J."/>
            <person name="Nguyen M."/>
            <person name="Pham P.K."/>
            <person name="Cheuk R.F."/>
            <person name="Karlin-Newmann G."/>
            <person name="Liu S.X."/>
            <person name="Lam B."/>
            <person name="Sakano H."/>
            <person name="Wu T."/>
            <person name="Yu G."/>
            <person name="Miranda M."/>
            <person name="Quach H.L."/>
            <person name="Tripp M."/>
            <person name="Chang C.H."/>
            <person name="Lee J.M."/>
            <person name="Toriumi M.J."/>
            <person name="Chan M.M."/>
            <person name="Tang C.C."/>
            <person name="Onodera C.S."/>
            <person name="Deng J.M."/>
            <person name="Akiyama K."/>
            <person name="Ansari Y."/>
            <person name="Arakawa T."/>
            <person name="Banh J."/>
            <person name="Banno F."/>
            <person name="Bowser L."/>
            <person name="Brooks S.Y."/>
            <person name="Carninci P."/>
            <person name="Chao Q."/>
            <person name="Choy N."/>
            <person name="Enju A."/>
            <person name="Goldsmith A.D."/>
            <person name="Gurjal M."/>
            <person name="Hansen N.F."/>
            <person name="Hayashizaki Y."/>
            <person name="Johnson-Hopson C."/>
            <person name="Hsuan V.W."/>
            <person name="Iida K."/>
            <person name="Karnes M."/>
            <person name="Khan S."/>
            <person name="Koesema E."/>
            <person name="Ishida J."/>
            <person name="Jiang P.X."/>
            <person name="Jones T."/>
            <person name="Kawai J."/>
            <person name="Kamiya A."/>
            <person name="Meyers C."/>
            <person name="Nakajima M."/>
            <person name="Narusaka M."/>
            <person name="Seki M."/>
            <person name="Sakurai T."/>
            <person name="Satou M."/>
            <person name="Tamse R."/>
            <person name="Vaysberg M."/>
            <person name="Wallender E.K."/>
            <person name="Wong C."/>
            <person name="Yamamura Y."/>
            <person name="Yuan S."/>
            <person name="Shinozaki K."/>
            <person name="Davis R.W."/>
            <person name="Theologis A."/>
            <person name="Ecker J.R."/>
        </authorList>
    </citation>
    <scope>NUCLEOTIDE SEQUENCE [LARGE SCALE MRNA]</scope>
    <source>
        <strain>cv. Columbia</strain>
    </source>
</reference>
<reference key="4">
    <citation type="journal article" date="2000" name="Plant Physiol.">
        <title>The ubiquitin-specific protease family from Arabidopsis. AtUBP1 and 2 are required for the resistance to the amino acid analog canavanine.</title>
        <authorList>
            <person name="Yan N."/>
            <person name="Doelling J.H."/>
            <person name="Falbel T.G."/>
            <person name="Durski A.M."/>
            <person name="Vierstra R.D."/>
        </authorList>
    </citation>
    <scope>GENE FAMILY ORGANIZATION</scope>
    <scope>NOMENCLATURE</scope>
</reference>
<keyword id="KW-0025">Alternative splicing</keyword>
<keyword id="KW-0378">Hydrolase</keyword>
<keyword id="KW-0472">Membrane</keyword>
<keyword id="KW-0479">Metal-binding</keyword>
<keyword id="KW-0645">Protease</keyword>
<keyword id="KW-1185">Reference proteome</keyword>
<keyword id="KW-0788">Thiol protease</keyword>
<keyword id="KW-0812">Transmembrane</keyword>
<keyword id="KW-1133">Transmembrane helix</keyword>
<keyword id="KW-0833">Ubl conjugation pathway</keyword>
<keyword id="KW-0862">Zinc</keyword>
<keyword id="KW-0863">Zinc-finger</keyword>
<gene>
    <name type="primary">UBP19</name>
    <name type="ordered locus">At2g24640</name>
    <name type="ORF">F25P17.6</name>
</gene>
<name>UBP19_ARATH</name>
<organism>
    <name type="scientific">Arabidopsis thaliana</name>
    <name type="common">Mouse-ear cress</name>
    <dbReference type="NCBI Taxonomy" id="3702"/>
    <lineage>
        <taxon>Eukaryota</taxon>
        <taxon>Viridiplantae</taxon>
        <taxon>Streptophyta</taxon>
        <taxon>Embryophyta</taxon>
        <taxon>Tracheophyta</taxon>
        <taxon>Spermatophyta</taxon>
        <taxon>Magnoliopsida</taxon>
        <taxon>eudicotyledons</taxon>
        <taxon>Gunneridae</taxon>
        <taxon>Pentapetalae</taxon>
        <taxon>rosids</taxon>
        <taxon>malvids</taxon>
        <taxon>Brassicales</taxon>
        <taxon>Brassicaceae</taxon>
        <taxon>Camelineae</taxon>
        <taxon>Arabidopsis</taxon>
    </lineage>
</organism>
<accession>Q9SJA1</accession>
<accession>Q9C5D8</accession>
<proteinExistence type="evidence at transcript level"/>
<dbReference type="EC" id="3.4.19.12"/>
<dbReference type="EMBL" id="AC006954">
    <property type="protein sequence ID" value="AAD23896.2"/>
    <property type="molecule type" value="Genomic_DNA"/>
</dbReference>
<dbReference type="EMBL" id="CP002685">
    <property type="protein sequence ID" value="AEC07607.1"/>
    <property type="molecule type" value="Genomic_DNA"/>
</dbReference>
<dbReference type="EMBL" id="AF360315">
    <property type="protein sequence ID" value="AAK26025.1"/>
    <property type="molecule type" value="mRNA"/>
</dbReference>
<dbReference type="EMBL" id="AY056366">
    <property type="protein sequence ID" value="AAL07252.1"/>
    <property type="molecule type" value="mRNA"/>
</dbReference>
<dbReference type="PIR" id="B84639">
    <property type="entry name" value="B84639"/>
</dbReference>
<dbReference type="RefSeq" id="NP_565576.1">
    <molecule id="Q9SJA1-1"/>
    <property type="nucleotide sequence ID" value="NM_128025.4"/>
</dbReference>
<dbReference type="SMR" id="Q9SJA1"/>
<dbReference type="FunCoup" id="Q9SJA1">
    <property type="interactions" value="2051"/>
</dbReference>
<dbReference type="STRING" id="3702.Q9SJA1"/>
<dbReference type="MEROPS" id="C19.A09"/>
<dbReference type="iPTMnet" id="Q9SJA1"/>
<dbReference type="PaxDb" id="3702-AT2G24640.1"/>
<dbReference type="ProteomicsDB" id="233061">
    <molecule id="Q9SJA1-1"/>
</dbReference>
<dbReference type="EnsemblPlants" id="AT2G24640.1">
    <molecule id="Q9SJA1-1"/>
    <property type="protein sequence ID" value="AT2G24640.1"/>
    <property type="gene ID" value="AT2G24640"/>
</dbReference>
<dbReference type="GeneID" id="817000"/>
<dbReference type="Gramene" id="AT2G24640.1">
    <molecule id="Q9SJA1-1"/>
    <property type="protein sequence ID" value="AT2G24640.1"/>
    <property type="gene ID" value="AT2G24640"/>
</dbReference>
<dbReference type="KEGG" id="ath:AT2G24640"/>
<dbReference type="Araport" id="AT2G24640"/>
<dbReference type="TAIR" id="AT2G24640">
    <property type="gene designation" value="UBP19"/>
</dbReference>
<dbReference type="eggNOG" id="KOG1865">
    <property type="taxonomic scope" value="Eukaryota"/>
</dbReference>
<dbReference type="InParanoid" id="Q9SJA1"/>
<dbReference type="PhylomeDB" id="Q9SJA1"/>
<dbReference type="PRO" id="PR:Q9SJA1"/>
<dbReference type="Proteomes" id="UP000006548">
    <property type="component" value="Chromosome 2"/>
</dbReference>
<dbReference type="ExpressionAtlas" id="Q9SJA1">
    <property type="expression patterns" value="baseline and differential"/>
</dbReference>
<dbReference type="GO" id="GO:0016020">
    <property type="term" value="C:membrane"/>
    <property type="evidence" value="ECO:0007669"/>
    <property type="project" value="UniProtKB-SubCell"/>
</dbReference>
<dbReference type="GO" id="GO:0004843">
    <property type="term" value="F:cysteine-type deubiquitinase activity"/>
    <property type="evidence" value="ECO:0007669"/>
    <property type="project" value="UniProtKB-EC"/>
</dbReference>
<dbReference type="GO" id="GO:0008270">
    <property type="term" value="F:zinc ion binding"/>
    <property type="evidence" value="ECO:0007669"/>
    <property type="project" value="UniProtKB-KW"/>
</dbReference>
<dbReference type="GO" id="GO:0016579">
    <property type="term" value="P:protein deubiquitination"/>
    <property type="evidence" value="ECO:0007669"/>
    <property type="project" value="InterPro"/>
</dbReference>
<dbReference type="GO" id="GO:0006508">
    <property type="term" value="P:proteolysis"/>
    <property type="evidence" value="ECO:0007669"/>
    <property type="project" value="UniProtKB-KW"/>
</dbReference>
<dbReference type="CDD" id="cd02661">
    <property type="entry name" value="Peptidase_C19E"/>
    <property type="match status" value="1"/>
</dbReference>
<dbReference type="FunFam" id="3.90.70.10:FF:000026">
    <property type="entry name" value="Ubiquitin carboxyl-terminal hydrolase 15"/>
    <property type="match status" value="1"/>
</dbReference>
<dbReference type="FunFam" id="6.10.140.2220:FF:000006">
    <property type="entry name" value="Ubiquitin carboxyl-terminal hydrolase 15"/>
    <property type="match status" value="1"/>
</dbReference>
<dbReference type="Gene3D" id="6.10.140.2220">
    <property type="match status" value="1"/>
</dbReference>
<dbReference type="Gene3D" id="3.90.70.10">
    <property type="entry name" value="Cysteine proteinases"/>
    <property type="match status" value="1"/>
</dbReference>
<dbReference type="InterPro" id="IPR038765">
    <property type="entry name" value="Papain-like_cys_pep_sf"/>
</dbReference>
<dbReference type="InterPro" id="IPR050164">
    <property type="entry name" value="Peptidase_C19"/>
</dbReference>
<dbReference type="InterPro" id="IPR001394">
    <property type="entry name" value="Peptidase_C19_UCH"/>
</dbReference>
<dbReference type="InterPro" id="IPR018200">
    <property type="entry name" value="USP_CS"/>
</dbReference>
<dbReference type="InterPro" id="IPR028889">
    <property type="entry name" value="USP_dom"/>
</dbReference>
<dbReference type="InterPro" id="IPR002893">
    <property type="entry name" value="Znf_MYND"/>
</dbReference>
<dbReference type="PANTHER" id="PTHR24006">
    <property type="entry name" value="UBIQUITIN CARBOXYL-TERMINAL HYDROLASE"/>
    <property type="match status" value="1"/>
</dbReference>
<dbReference type="PANTHER" id="PTHR24006:SF677">
    <property type="entry name" value="UBIQUITIN CARBOXYL-TERMINAL HYDROLASE 19"/>
    <property type="match status" value="1"/>
</dbReference>
<dbReference type="Pfam" id="PF00443">
    <property type="entry name" value="UCH"/>
    <property type="match status" value="1"/>
</dbReference>
<dbReference type="Pfam" id="PF01753">
    <property type="entry name" value="zf-MYND"/>
    <property type="match status" value="1"/>
</dbReference>
<dbReference type="SUPFAM" id="SSF54001">
    <property type="entry name" value="Cysteine proteinases"/>
    <property type="match status" value="1"/>
</dbReference>
<dbReference type="SUPFAM" id="SSF144232">
    <property type="entry name" value="HIT/MYND zinc finger-like"/>
    <property type="match status" value="1"/>
</dbReference>
<dbReference type="PROSITE" id="PS00972">
    <property type="entry name" value="USP_1"/>
    <property type="match status" value="1"/>
</dbReference>
<dbReference type="PROSITE" id="PS50235">
    <property type="entry name" value="USP_3"/>
    <property type="match status" value="1"/>
</dbReference>
<dbReference type="PROSITE" id="PS01360">
    <property type="entry name" value="ZF_MYND_1"/>
    <property type="match status" value="1"/>
</dbReference>
<dbReference type="PROSITE" id="PS50865">
    <property type="entry name" value="ZF_MYND_2"/>
    <property type="match status" value="1"/>
</dbReference>
<comment type="function">
    <text evidence="1">Recognizes and hydrolyzes the peptide bond at the C-terminal Gly of ubiquitin. Involved in the processing of poly-ubiquitin precursors as well as that of ubiquitinated proteins (By similarity).</text>
</comment>
<comment type="catalytic activity">
    <reaction>
        <text>Thiol-dependent hydrolysis of ester, thioester, amide, peptide and isopeptide bonds formed by the C-terminal Gly of ubiquitin (a 76-residue protein attached to proteins as an intracellular targeting signal).</text>
        <dbReference type="EC" id="3.4.19.12"/>
    </reaction>
</comment>
<comment type="subcellular location">
    <subcellularLocation>
        <location evidence="6">Membrane</location>
        <topology evidence="6">Single-pass membrane protein</topology>
    </subcellularLocation>
</comment>
<comment type="alternative products">
    <event type="alternative splicing"/>
    <isoform>
        <id>Q9SJA1-1</id>
        <name>1</name>
        <sequence type="displayed"/>
    </isoform>
    <text>A number of isoforms are produced. According to EST sequences.</text>
</comment>
<comment type="similarity">
    <text evidence="6">Belongs to the peptidase C19 family.</text>
</comment>
<sequence length="672" mass="75720">MHEVGLFVDLNSFTQLILTLFFVSIGLLYFVKRTAAKYFEVGGGSGGFDRDHRRDFMVSDTAECSVCGKATTKKCSRCKSVRYCSAACQTSDWKSGHKLKCKGFRSTDSSPVRRDDIDFEASLFGNRSASKKTRIALVPQQSQSKATLKPTDVLFPYESFVRYYNWDRPIMAPCGLTNCGNSCFANVVLQCLSWTRPLVAYLLERGHKRECRRNDWCFLCEFENHLDRANYSRFPFSPMNIISRLPNIGGNLGYGRQEDAHELMRFAIDMMQSVCLDEFGGEKVVPPRAQETTLIQYIFGGLLQSQVQCTACSNVSDQYENMMDLTVEIHGDAVSLEECLDQFTAKEWLQGDNLYKCDRCDDYVKACKRLSIRCAPNILTIALKRFQGGRFGKLNKRISFPETFDLGPYMSGGGEGSDVYKLYAVIVHLDMLNASFFGHYICYVKDFRGNWYRIDDSEVEKVELEDVLSQRAYMLLYSRVQPRPSNLRSEESQDEKKTDTLNTESNQDGSVESSGVGTNDTSVSSLCNGIISHSEDPEYEKESSLSASVPVSEEGKEVDVKVDTVDSESNRSIDMEHDSGTDHQEEEANGKEDPTVENLAVDSSCLDITTPSPSAATEFIPQENERSDTESKPLEKEHSDTESNKPLEKEHLDSESKPLEKEHSDTEMIDAQ</sequence>
<protein>
    <recommendedName>
        <fullName>Ubiquitin carboxyl-terminal hydrolase 19</fullName>
        <ecNumber>3.4.19.12</ecNumber>
    </recommendedName>
    <alternativeName>
        <fullName>Deubiquitinating enzyme 19</fullName>
        <shortName>AtUBP19</shortName>
    </alternativeName>
    <alternativeName>
        <fullName>Ubiquitin thioesterase 19</fullName>
    </alternativeName>
    <alternativeName>
        <fullName>Ubiquitin-specific-processing protease 19</fullName>
    </alternativeName>
</protein>